<dbReference type="EC" id="5.6.2.2"/>
<dbReference type="EMBL" id="AY371050">
    <property type="protein sequence ID" value="AAQ75096.1"/>
    <property type="status" value="ALT_FRAME"/>
    <property type="molecule type" value="mRNA"/>
</dbReference>
<dbReference type="EMBL" id="AP006528">
    <property type="protein sequence ID" value="BAD26507.1"/>
    <property type="molecule type" value="Genomic_DNA"/>
</dbReference>
<dbReference type="EMBL" id="AP008215">
    <property type="protein sequence ID" value="BAF24675.1"/>
    <property type="molecule type" value="Genomic_DNA"/>
</dbReference>
<dbReference type="EMBL" id="AP014965">
    <property type="protein sequence ID" value="BAT07216.1"/>
    <property type="molecule type" value="Genomic_DNA"/>
</dbReference>
<dbReference type="EMBL" id="CM000146">
    <property type="protein sequence ID" value="EEE69338.1"/>
    <property type="molecule type" value="Genomic_DNA"/>
</dbReference>
<dbReference type="EMBL" id="AK101452">
    <property type="status" value="NOT_ANNOTATED_CDS"/>
    <property type="molecule type" value="mRNA"/>
</dbReference>
<dbReference type="RefSeq" id="NP_001409641.1">
    <property type="nucleotide sequence ID" value="NM_001422712.1"/>
</dbReference>
<dbReference type="RefSeq" id="XP_015612693.1">
    <property type="nucleotide sequence ID" value="XM_015757207.1"/>
</dbReference>
<dbReference type="SMR" id="Q6H442"/>
<dbReference type="FunCoup" id="Q6H442">
    <property type="interactions" value="27"/>
</dbReference>
<dbReference type="STRING" id="39947.Q6H442"/>
<dbReference type="PaxDb" id="39947-Q6H442"/>
<dbReference type="EnsemblPlants" id="Os09t0279600-01">
    <property type="protein sequence ID" value="Os09t0279600-01"/>
    <property type="gene ID" value="Os09g0279600"/>
</dbReference>
<dbReference type="GeneID" id="4346606"/>
<dbReference type="Gramene" id="Os09t0279600-01">
    <property type="protein sequence ID" value="Os09t0279600-01"/>
    <property type="gene ID" value="Os09g0279600"/>
</dbReference>
<dbReference type="KEGG" id="dosa:Os09g0279600"/>
<dbReference type="eggNOG" id="ENOG502QQC0">
    <property type="taxonomic scope" value="Eukaryota"/>
</dbReference>
<dbReference type="HOGENOM" id="CLU_006403_1_0_1"/>
<dbReference type="InParanoid" id="Q6H442"/>
<dbReference type="OMA" id="VYRGNPF"/>
<dbReference type="OrthoDB" id="1562195at2759"/>
<dbReference type="Proteomes" id="UP000000763">
    <property type="component" value="Chromosome 9"/>
</dbReference>
<dbReference type="Proteomes" id="UP000007752">
    <property type="component" value="Chromosome 9"/>
</dbReference>
<dbReference type="Proteomes" id="UP000059680">
    <property type="component" value="Chromosome 9"/>
</dbReference>
<dbReference type="GO" id="GO:0005829">
    <property type="term" value="C:cytosol"/>
    <property type="evidence" value="ECO:0000318"/>
    <property type="project" value="GO_Central"/>
</dbReference>
<dbReference type="GO" id="GO:0009330">
    <property type="term" value="C:DNA topoisomerase type II (double strand cut, ATP-hydrolyzing) complex"/>
    <property type="evidence" value="ECO:0007669"/>
    <property type="project" value="UniProtKB-UniRule"/>
</dbReference>
<dbReference type="GO" id="GO:0005634">
    <property type="term" value="C:nucleus"/>
    <property type="evidence" value="ECO:0007669"/>
    <property type="project" value="UniProtKB-SubCell"/>
</dbReference>
<dbReference type="GO" id="GO:0015935">
    <property type="term" value="C:small ribosomal subunit"/>
    <property type="evidence" value="ECO:0000318"/>
    <property type="project" value="GO_Central"/>
</dbReference>
<dbReference type="GO" id="GO:0005524">
    <property type="term" value="F:ATP binding"/>
    <property type="evidence" value="ECO:0007669"/>
    <property type="project" value="UniProtKB-UniRule"/>
</dbReference>
<dbReference type="GO" id="GO:0003677">
    <property type="term" value="F:DNA binding"/>
    <property type="evidence" value="ECO:0007669"/>
    <property type="project" value="UniProtKB-UniRule"/>
</dbReference>
<dbReference type="GO" id="GO:0003918">
    <property type="term" value="F:DNA topoisomerase type II (double strand cut, ATP-hydrolyzing) activity"/>
    <property type="evidence" value="ECO:0007669"/>
    <property type="project" value="UniProtKB-UniRule"/>
</dbReference>
<dbReference type="GO" id="GO:0042803">
    <property type="term" value="F:protein homodimerization activity"/>
    <property type="evidence" value="ECO:0000353"/>
    <property type="project" value="UniProtKB"/>
</dbReference>
<dbReference type="GO" id="GO:0000902">
    <property type="term" value="P:cell morphogenesis"/>
    <property type="evidence" value="ECO:0007669"/>
    <property type="project" value="EnsemblPlants"/>
</dbReference>
<dbReference type="GO" id="GO:0042023">
    <property type="term" value="P:DNA endoreduplication"/>
    <property type="evidence" value="ECO:0007669"/>
    <property type="project" value="EnsemblPlants"/>
</dbReference>
<dbReference type="GO" id="GO:0006265">
    <property type="term" value="P:DNA topological change"/>
    <property type="evidence" value="ECO:0007669"/>
    <property type="project" value="UniProtKB-UniRule"/>
</dbReference>
<dbReference type="GO" id="GO:0007389">
    <property type="term" value="P:pattern specification process"/>
    <property type="evidence" value="ECO:0007669"/>
    <property type="project" value="EnsemblPlants"/>
</dbReference>
<dbReference type="GO" id="GO:0009741">
    <property type="term" value="P:response to brassinosteroid"/>
    <property type="evidence" value="ECO:0007669"/>
    <property type="project" value="EnsemblPlants"/>
</dbReference>
<dbReference type="GO" id="GO:0010026">
    <property type="term" value="P:trichome differentiation"/>
    <property type="evidence" value="ECO:0007669"/>
    <property type="project" value="EnsemblPlants"/>
</dbReference>
<dbReference type="CDD" id="cd00823">
    <property type="entry name" value="TopoIIB_Trans"/>
    <property type="match status" value="1"/>
</dbReference>
<dbReference type="FunFam" id="1.10.8.50:FF:000006">
    <property type="entry name" value="DNA topoisomerase 6 subunit B"/>
    <property type="match status" value="1"/>
</dbReference>
<dbReference type="FunFam" id="3.30.230.10:FF:000050">
    <property type="entry name" value="DNA topoisomerase 6 subunit B"/>
    <property type="match status" value="1"/>
</dbReference>
<dbReference type="Gene3D" id="1.10.8.50">
    <property type="match status" value="1"/>
</dbReference>
<dbReference type="Gene3D" id="3.30.230.10">
    <property type="match status" value="1"/>
</dbReference>
<dbReference type="Gene3D" id="3.30.565.10">
    <property type="entry name" value="Histidine kinase-like ATPase, C-terminal domain"/>
    <property type="match status" value="1"/>
</dbReference>
<dbReference type="HAMAP" id="MF_00322">
    <property type="entry name" value="Top6B"/>
    <property type="match status" value="1"/>
</dbReference>
<dbReference type="InterPro" id="IPR036890">
    <property type="entry name" value="HATPase_C_sf"/>
</dbReference>
<dbReference type="InterPro" id="IPR020568">
    <property type="entry name" value="Ribosomal_Su5_D2-typ_SF"/>
</dbReference>
<dbReference type="InterPro" id="IPR014721">
    <property type="entry name" value="Ribsml_uS5_D2-typ_fold_subgr"/>
</dbReference>
<dbReference type="InterPro" id="IPR005734">
    <property type="entry name" value="TopoVI_B"/>
</dbReference>
<dbReference type="InterPro" id="IPR015320">
    <property type="entry name" value="TopoVI_B_transducer"/>
</dbReference>
<dbReference type="NCBIfam" id="NF003218">
    <property type="entry name" value="PRK04184.1"/>
    <property type="match status" value="1"/>
</dbReference>
<dbReference type="PANTHER" id="PTHR48444">
    <property type="entry name" value="DNA TOPOISOMERASE 6 SUBUNIT B"/>
    <property type="match status" value="1"/>
</dbReference>
<dbReference type="PANTHER" id="PTHR48444:SF1">
    <property type="entry name" value="DNA TOPOISOMERASE 6 SUBUNIT B"/>
    <property type="match status" value="1"/>
</dbReference>
<dbReference type="Pfam" id="PF13589">
    <property type="entry name" value="HATPase_c_3"/>
    <property type="match status" value="1"/>
</dbReference>
<dbReference type="Pfam" id="PF09239">
    <property type="entry name" value="Topo-VIb_trans"/>
    <property type="match status" value="1"/>
</dbReference>
<dbReference type="SUPFAM" id="SSF55874">
    <property type="entry name" value="ATPase domain of HSP90 chaperone/DNA topoisomerase II/histidine kinase"/>
    <property type="match status" value="1"/>
</dbReference>
<dbReference type="SUPFAM" id="SSF54211">
    <property type="entry name" value="Ribosomal protein S5 domain 2-like"/>
    <property type="match status" value="1"/>
</dbReference>
<evidence type="ECO:0000250" key="1"/>
<evidence type="ECO:0000256" key="2">
    <source>
        <dbReference type="SAM" id="MobiDB-lite"/>
    </source>
</evidence>
<evidence type="ECO:0000269" key="3">
    <source>
    </source>
</evidence>
<evidence type="ECO:0000305" key="4"/>
<accession>Q6H442</accession>
<accession>A0A0P0XKM8</accession>
<accession>Q6UFU6</accession>
<keyword id="KW-0067">ATP-binding</keyword>
<keyword id="KW-0238">DNA-binding</keyword>
<keyword id="KW-0413">Isomerase</keyword>
<keyword id="KW-0547">Nucleotide-binding</keyword>
<keyword id="KW-0539">Nucleus</keyword>
<keyword id="KW-1185">Reference proteome</keyword>
<keyword id="KW-0799">Topoisomerase</keyword>
<organism>
    <name type="scientific">Oryza sativa subsp. japonica</name>
    <name type="common">Rice</name>
    <dbReference type="NCBI Taxonomy" id="39947"/>
    <lineage>
        <taxon>Eukaryota</taxon>
        <taxon>Viridiplantae</taxon>
        <taxon>Streptophyta</taxon>
        <taxon>Embryophyta</taxon>
        <taxon>Tracheophyta</taxon>
        <taxon>Spermatophyta</taxon>
        <taxon>Magnoliopsida</taxon>
        <taxon>Liliopsida</taxon>
        <taxon>Poales</taxon>
        <taxon>Poaceae</taxon>
        <taxon>BOP clade</taxon>
        <taxon>Oryzoideae</taxon>
        <taxon>Oryzeae</taxon>
        <taxon>Oryzinae</taxon>
        <taxon>Oryza</taxon>
        <taxon>Oryza sativa</taxon>
    </lineage>
</organism>
<proteinExistence type="evidence at protein level"/>
<sequence length="696" mass="78015">MDDDAGDGAASGGTKRKVTAASSSAAAKGKAAGKGKAASKASALATAKESSLLKQKSPAEFFAENKNIAGFDNPGKSLYTTMRELVENALDSAESISELPDIEIIIEEITKSKFNTMIGLVDRQRIDEELYDDFESAKAREKRLAKEARFQETQAKNAALGKKVKEAPAARGKGRGEAAFFRVTCKDNGRGMPHDDIPNMLGRVLSGTKYGLRQTRGKFGLGAKMALIWSKMSTGLPIEIKSSMKGQNFISFCLLDIDIHKNVPHVHLHEKRENKDRWHGAELQVIIEGNWTTHRSKILHYMRQMAVITPYAQFLFRFLSDSPDKNLTIQFARRTDVMPPIPLQTKHHPSAVDLLLIKRLISETTKQNLLQFLQHEFVNISKSHAERLIGEMGPDFSAKTTVKSLTSQQLVRIHQLFRQAKFDDPSGNCLSPAGEYNLRLGIIKELHPDLVATHASSPQVFEGHPFIVEAGISIGGKDVKHGLNIFRYANRIPLLFEQGADVITRTALKRINWSSYKINQQQDKIGVFVSIVSTKIPFKGTGKEYIGDDITEIASAVQSALKQCCLQLKSKIVKKLQARERQDRKRNLNRYIPDVARAIMETLGEIADESPPKRPRYDKEDEELLEKVNSEEVTEMTFRDCLTQHVEQVDYEMALEYAMQSGVSEEPREALYLNSLEGSYKFIDFQSPVFVFRFIP</sequence>
<protein>
    <recommendedName>
        <fullName>DNA topoisomerase 6 subunit B</fullName>
        <shortName>OsTOP6B</shortName>
        <ecNumber>5.6.2.2</ecNumber>
    </recommendedName>
</protein>
<gene>
    <name type="primary">TOP6B</name>
    <name type="ordered locus">Os09g0279600</name>
    <name type="ordered locus">LOC_Os09g10770</name>
    <name type="ORF">OsJ_28656</name>
    <name type="ORF">P0651G05.4</name>
</gene>
<reference key="1">
    <citation type="submission" date="2003-08" db="EMBL/GenBank/DDBJ databases">
        <title>Molecular characterization of OsTOP6B, a homolog of subunit B of archaebacterial topoisomerase 6, from Oryza sativa.</title>
        <authorList>
            <person name="Wang T."/>
            <person name="Ding Z.J."/>
        </authorList>
    </citation>
    <scope>NUCLEOTIDE SEQUENCE [MRNA]</scope>
    <source>
        <strain>cv. Zhonghua 10</strain>
        <tissue>Flower</tissue>
    </source>
</reference>
<reference key="2">
    <citation type="journal article" date="2005" name="Nature">
        <title>The map-based sequence of the rice genome.</title>
        <authorList>
            <consortium name="International rice genome sequencing project (IRGSP)"/>
        </authorList>
    </citation>
    <scope>NUCLEOTIDE SEQUENCE [LARGE SCALE GENOMIC DNA]</scope>
    <source>
        <strain>cv. Nipponbare</strain>
    </source>
</reference>
<reference key="3">
    <citation type="journal article" date="2008" name="Nucleic Acids Res.">
        <title>The rice annotation project database (RAP-DB): 2008 update.</title>
        <authorList>
            <consortium name="The rice annotation project (RAP)"/>
        </authorList>
    </citation>
    <scope>GENOME REANNOTATION</scope>
    <source>
        <strain>cv. Nipponbare</strain>
    </source>
</reference>
<reference key="4">
    <citation type="journal article" date="2013" name="Rice">
        <title>Improvement of the Oryza sativa Nipponbare reference genome using next generation sequence and optical map data.</title>
        <authorList>
            <person name="Kawahara Y."/>
            <person name="de la Bastide M."/>
            <person name="Hamilton J.P."/>
            <person name="Kanamori H."/>
            <person name="McCombie W.R."/>
            <person name="Ouyang S."/>
            <person name="Schwartz D.C."/>
            <person name="Tanaka T."/>
            <person name="Wu J."/>
            <person name="Zhou S."/>
            <person name="Childs K.L."/>
            <person name="Davidson R.M."/>
            <person name="Lin H."/>
            <person name="Quesada-Ocampo L."/>
            <person name="Vaillancourt B."/>
            <person name="Sakai H."/>
            <person name="Lee S.S."/>
            <person name="Kim J."/>
            <person name="Numa H."/>
            <person name="Itoh T."/>
            <person name="Buell C.R."/>
            <person name="Matsumoto T."/>
        </authorList>
    </citation>
    <scope>GENOME REANNOTATION</scope>
    <source>
        <strain>cv. Nipponbare</strain>
    </source>
</reference>
<reference key="5">
    <citation type="journal article" date="2005" name="PLoS Biol.">
        <title>The genomes of Oryza sativa: a history of duplications.</title>
        <authorList>
            <person name="Yu J."/>
            <person name="Wang J."/>
            <person name="Lin W."/>
            <person name="Li S."/>
            <person name="Li H."/>
            <person name="Zhou J."/>
            <person name="Ni P."/>
            <person name="Dong W."/>
            <person name="Hu S."/>
            <person name="Zeng C."/>
            <person name="Zhang J."/>
            <person name="Zhang Y."/>
            <person name="Li R."/>
            <person name="Xu Z."/>
            <person name="Li S."/>
            <person name="Li X."/>
            <person name="Zheng H."/>
            <person name="Cong L."/>
            <person name="Lin L."/>
            <person name="Yin J."/>
            <person name="Geng J."/>
            <person name="Li G."/>
            <person name="Shi J."/>
            <person name="Liu J."/>
            <person name="Lv H."/>
            <person name="Li J."/>
            <person name="Wang J."/>
            <person name="Deng Y."/>
            <person name="Ran L."/>
            <person name="Shi X."/>
            <person name="Wang X."/>
            <person name="Wu Q."/>
            <person name="Li C."/>
            <person name="Ren X."/>
            <person name="Wang J."/>
            <person name="Wang X."/>
            <person name="Li D."/>
            <person name="Liu D."/>
            <person name="Zhang X."/>
            <person name="Ji Z."/>
            <person name="Zhao W."/>
            <person name="Sun Y."/>
            <person name="Zhang Z."/>
            <person name="Bao J."/>
            <person name="Han Y."/>
            <person name="Dong L."/>
            <person name="Ji J."/>
            <person name="Chen P."/>
            <person name="Wu S."/>
            <person name="Liu J."/>
            <person name="Xiao Y."/>
            <person name="Bu D."/>
            <person name="Tan J."/>
            <person name="Yang L."/>
            <person name="Ye C."/>
            <person name="Zhang J."/>
            <person name="Xu J."/>
            <person name="Zhou Y."/>
            <person name="Yu Y."/>
            <person name="Zhang B."/>
            <person name="Zhuang S."/>
            <person name="Wei H."/>
            <person name="Liu B."/>
            <person name="Lei M."/>
            <person name="Yu H."/>
            <person name="Li Y."/>
            <person name="Xu H."/>
            <person name="Wei S."/>
            <person name="He X."/>
            <person name="Fang L."/>
            <person name="Zhang Z."/>
            <person name="Zhang Y."/>
            <person name="Huang X."/>
            <person name="Su Z."/>
            <person name="Tong W."/>
            <person name="Li J."/>
            <person name="Tong Z."/>
            <person name="Li S."/>
            <person name="Ye J."/>
            <person name="Wang L."/>
            <person name="Fang L."/>
            <person name="Lei T."/>
            <person name="Chen C.-S."/>
            <person name="Chen H.-C."/>
            <person name="Xu Z."/>
            <person name="Li H."/>
            <person name="Huang H."/>
            <person name="Zhang F."/>
            <person name="Xu H."/>
            <person name="Li N."/>
            <person name="Zhao C."/>
            <person name="Li S."/>
            <person name="Dong L."/>
            <person name="Huang Y."/>
            <person name="Li L."/>
            <person name="Xi Y."/>
            <person name="Qi Q."/>
            <person name="Li W."/>
            <person name="Zhang B."/>
            <person name="Hu W."/>
            <person name="Zhang Y."/>
            <person name="Tian X."/>
            <person name="Jiao Y."/>
            <person name="Liang X."/>
            <person name="Jin J."/>
            <person name="Gao L."/>
            <person name="Zheng W."/>
            <person name="Hao B."/>
            <person name="Liu S.-M."/>
            <person name="Wang W."/>
            <person name="Yuan L."/>
            <person name="Cao M."/>
            <person name="McDermott J."/>
            <person name="Samudrala R."/>
            <person name="Wang J."/>
            <person name="Wong G.K.-S."/>
            <person name="Yang H."/>
        </authorList>
    </citation>
    <scope>NUCLEOTIDE SEQUENCE [LARGE SCALE GENOMIC DNA]</scope>
    <source>
        <strain>cv. Nipponbare</strain>
    </source>
</reference>
<reference key="6">
    <citation type="journal article" date="2003" name="Science">
        <title>Collection, mapping, and annotation of over 28,000 cDNA clones from japonica rice.</title>
        <authorList>
            <consortium name="The rice full-length cDNA consortium"/>
        </authorList>
    </citation>
    <scope>NUCLEOTIDE SEQUENCE [LARGE SCALE MRNA]</scope>
    <source>
        <strain>cv. Nipponbare</strain>
    </source>
</reference>
<reference key="7">
    <citation type="journal article" date="2011" name="PLoS ONE">
        <title>OsSpo11-4, a rice homologue of the archaeal TopVIA protein, mediates double-strand DNA cleavage and interacts with OsTopVIB.</title>
        <authorList>
            <person name="An X.J."/>
            <person name="Deng Z.Y."/>
            <person name="Wang T."/>
        </authorList>
    </citation>
    <scope>HOMODIMERIZATION</scope>
    <scope>INTERACTION WITH SPO11-4</scope>
    <source>
        <strain>cv. Zhonghua 10</strain>
    </source>
</reference>
<name>TOP6B_ORYSJ</name>
<feature type="chain" id="PRO_0000429781" description="DNA topoisomerase 6 subunit B">
    <location>
        <begin position="1"/>
        <end position="696"/>
    </location>
</feature>
<feature type="region of interest" description="Disordered" evidence="2">
    <location>
        <begin position="1"/>
        <end position="36"/>
    </location>
</feature>
<feature type="compositionally biased region" description="Low complexity" evidence="2">
    <location>
        <begin position="20"/>
        <end position="36"/>
    </location>
</feature>
<feature type="binding site" evidence="1">
    <location>
        <position position="88"/>
    </location>
    <ligand>
        <name>ATP</name>
        <dbReference type="ChEBI" id="CHEBI:30616"/>
    </ligand>
</feature>
<feature type="binding site" evidence="1">
    <location>
        <position position="187"/>
    </location>
    <ligand>
        <name>ATP</name>
        <dbReference type="ChEBI" id="CHEBI:30616"/>
    </ligand>
</feature>
<feature type="binding site" evidence="1">
    <location>
        <begin position="208"/>
        <end position="209"/>
    </location>
    <ligand>
        <name>ATP</name>
        <dbReference type="ChEBI" id="CHEBI:30616"/>
    </ligand>
</feature>
<feature type="binding site" evidence="1">
    <location>
        <begin position="217"/>
        <end position="224"/>
    </location>
    <ligand>
        <name>ATP</name>
        <dbReference type="ChEBI" id="CHEBI:30616"/>
    </ligand>
</feature>
<feature type="binding site" evidence="1">
    <location>
        <position position="543"/>
    </location>
    <ligand>
        <name>ATP</name>
        <dbReference type="ChEBI" id="CHEBI:30616"/>
    </ligand>
</feature>
<feature type="sequence conflict" description="In Ref. 6; AK101452." evidence="4" ref="6">
    <original>F</original>
    <variation>I</variation>
    <location>
        <position position="417"/>
    </location>
</feature>
<comment type="function">
    <text evidence="1">Component of the DNA topoisomerase VI involved in chromatin organization and progression of endoreduplication cycles. Relaxes both positive and negative superturns and exhibits a strong decatenase activity. The B subunit binds ATP (By similarity).</text>
</comment>
<comment type="catalytic activity">
    <reaction>
        <text>ATP-dependent breakage, passage and rejoining of double-stranded DNA.</text>
        <dbReference type="EC" id="5.6.2.2"/>
    </reaction>
</comment>
<comment type="subunit">
    <text evidence="3 4">Homodimer. Heterotetramer of two TOP6A and two TOP6B subunits (Probable). Interacts with SPO11-4.</text>
</comment>
<comment type="subcellular location">
    <subcellularLocation>
        <location evidence="1">Nucleus</location>
    </subcellularLocation>
</comment>
<comment type="similarity">
    <text evidence="4">Belongs to the TOP6B family.</text>
</comment>
<comment type="sequence caution" evidence="4">
    <conflict type="frameshift">
        <sequence resource="EMBL-CDS" id="AAQ75096"/>
    </conflict>
</comment>